<evidence type="ECO:0000250" key="1"/>
<evidence type="ECO:0000255" key="2">
    <source>
        <dbReference type="PROSITE-ProRule" id="PRU00052"/>
    </source>
</evidence>
<evidence type="ECO:0000255" key="3">
    <source>
        <dbReference type="PROSITE-ProRule" id="PRU00107"/>
    </source>
</evidence>
<evidence type="ECO:0000255" key="4">
    <source>
        <dbReference type="PROSITE-ProRule" id="PRU00110"/>
    </source>
</evidence>
<evidence type="ECO:0000305" key="5"/>
<sequence length="812" mass="87693">MPMSDYLDAGNEELLKDFFSEAEQQVEQLESNILVIEQDPTNRDAVDEIFRAAHTLKGGAATVEMHELSGFTHAVEDLLDGIRSEKVTVDGAVVDLLLTSLDVIKAMLESRAGGGPYAEDVSDLVARLRSYLPASGTVPGAARGLSVSSPNAAEAAKGTAVGEDGTEAPQVGRVPPLSLLSEYDRLELREIVPPEHSVYALTVRFDESNLMNTVGGIQVFTALKSCASVLKTVPDFDALYQDMFHEYVVYFVSTVQDSVCVSQVASIPDVTLSVSVAEVALADLCTPLSEHGELGVCADAGTGGVSEGSGAAVRSGGERVPNSLPKQVAGCAVPSAKDSSKATSSGYGSGSVLRVDAKRIDYLLNLVSETVIIKASLNQSALEFGEVYTLFQNANGAYKERLRKFFDRVPAYLEKVKNGQDADAVRKGMIAEAVGVFDIFSSFENGLKQSVTKFRSSAQNLGRISGELQEGVMKIRMVPISQIFSRYPRVVRDLSRDLRKEVRLVIEGEETELDKSVVEDLLDPIMHCVRNSLDHGIEAPEVRARSGKPAQGTLLLRASNEGNMIVIEVADDGRGIDVEAVKTKAVERGVLHPGKNLTEVEAFQLIFAPGFSTSRSVSNVSGRGVGLDVVKTHIERLNGTVSVFSEVQKGTRFVIKLPLTLAIIQGLLIRVGQEVYSIPIASVIESHRIKSEEINRIDNYEVFNVRNEVISLLRLDRLFGISCDDEVTGQYHYVVIVGAAEKKVGLMVDALIGEEDVVIKPLRDQFTSSPGIAGASILGDGSVSLIIDVGQLLELGLKREILARERREATVW</sequence>
<keyword id="KW-0067">ATP-binding</keyword>
<keyword id="KW-0145">Chemotaxis</keyword>
<keyword id="KW-0963">Cytoplasm</keyword>
<keyword id="KW-0418">Kinase</keyword>
<keyword id="KW-0547">Nucleotide-binding</keyword>
<keyword id="KW-0597">Phosphoprotein</keyword>
<keyword id="KW-1185">Reference proteome</keyword>
<keyword id="KW-0808">Transferase</keyword>
<keyword id="KW-0902">Two-component regulatory system</keyword>
<proteinExistence type="inferred from homology"/>
<dbReference type="EC" id="2.7.13.3"/>
<dbReference type="EMBL" id="U61851">
    <property type="protein sequence ID" value="AAC45555.1"/>
    <property type="molecule type" value="Genomic_DNA"/>
</dbReference>
<dbReference type="EMBL" id="AE000520">
    <property type="protein sequence ID" value="AAC65348.1"/>
    <property type="molecule type" value="Genomic_DNA"/>
</dbReference>
<dbReference type="PIR" id="A71335">
    <property type="entry name" value="A71335"/>
</dbReference>
<dbReference type="SMR" id="P96123"/>
<dbReference type="STRING" id="243276.TP_0363"/>
<dbReference type="EnsemblBacteria" id="AAC65348">
    <property type="protein sequence ID" value="AAC65348"/>
    <property type="gene ID" value="TP_0363"/>
</dbReference>
<dbReference type="KEGG" id="tpa:TP_0363"/>
<dbReference type="KEGG" id="tpw:TPANIC_0363"/>
<dbReference type="eggNOG" id="COG0643">
    <property type="taxonomic scope" value="Bacteria"/>
</dbReference>
<dbReference type="eggNOG" id="COG2198">
    <property type="taxonomic scope" value="Bacteria"/>
</dbReference>
<dbReference type="HOGENOM" id="CLU_000650_3_2_12"/>
<dbReference type="OrthoDB" id="9803176at2"/>
<dbReference type="BRENDA" id="2.7.13.3">
    <property type="organism ID" value="6429"/>
</dbReference>
<dbReference type="Proteomes" id="UP000000811">
    <property type="component" value="Chromosome"/>
</dbReference>
<dbReference type="GO" id="GO:0005737">
    <property type="term" value="C:cytoplasm"/>
    <property type="evidence" value="ECO:0007669"/>
    <property type="project" value="UniProtKB-SubCell"/>
</dbReference>
<dbReference type="GO" id="GO:0005524">
    <property type="term" value="F:ATP binding"/>
    <property type="evidence" value="ECO:0007669"/>
    <property type="project" value="UniProtKB-KW"/>
</dbReference>
<dbReference type="GO" id="GO:0000155">
    <property type="term" value="F:phosphorelay sensor kinase activity"/>
    <property type="evidence" value="ECO:0007669"/>
    <property type="project" value="InterPro"/>
</dbReference>
<dbReference type="GO" id="GO:0006935">
    <property type="term" value="P:chemotaxis"/>
    <property type="evidence" value="ECO:0007669"/>
    <property type="project" value="UniProtKB-KW"/>
</dbReference>
<dbReference type="CDD" id="cd00731">
    <property type="entry name" value="CheA_reg"/>
    <property type="match status" value="1"/>
</dbReference>
<dbReference type="CDD" id="cd16916">
    <property type="entry name" value="HATPase_CheA-like"/>
    <property type="match status" value="1"/>
</dbReference>
<dbReference type="CDD" id="cd00088">
    <property type="entry name" value="HPT"/>
    <property type="match status" value="1"/>
</dbReference>
<dbReference type="FunFam" id="2.30.30.40:FF:000048">
    <property type="entry name" value="Chemotaxis protein CheA, putative"/>
    <property type="match status" value="1"/>
</dbReference>
<dbReference type="FunFam" id="3.30.565.10:FF:000016">
    <property type="entry name" value="Chemotaxis protein CheA, putative"/>
    <property type="match status" value="1"/>
</dbReference>
<dbReference type="Gene3D" id="1.10.287.560">
    <property type="entry name" value="Histidine kinase CheA-like, homodimeric domain"/>
    <property type="match status" value="1"/>
</dbReference>
<dbReference type="Gene3D" id="3.30.70.1110">
    <property type="entry name" value="Histidine kinase CheA-like, P2 response regulator-binding domain"/>
    <property type="match status" value="1"/>
</dbReference>
<dbReference type="Gene3D" id="3.30.565.10">
    <property type="entry name" value="Histidine kinase-like ATPase, C-terminal domain"/>
    <property type="match status" value="1"/>
</dbReference>
<dbReference type="Gene3D" id="1.20.120.160">
    <property type="entry name" value="HPT domain"/>
    <property type="match status" value="1"/>
</dbReference>
<dbReference type="Gene3D" id="2.30.30.40">
    <property type="entry name" value="SH3 Domains"/>
    <property type="match status" value="1"/>
</dbReference>
<dbReference type="InterPro" id="IPR051315">
    <property type="entry name" value="Bact_Chemotaxis_CheA"/>
</dbReference>
<dbReference type="InterPro" id="IPR004105">
    <property type="entry name" value="CheA-like_dim"/>
</dbReference>
<dbReference type="InterPro" id="IPR037006">
    <property type="entry name" value="CheA-like_homodim_sf"/>
</dbReference>
<dbReference type="InterPro" id="IPR037052">
    <property type="entry name" value="CheA-like_P2_sf"/>
</dbReference>
<dbReference type="InterPro" id="IPR010808">
    <property type="entry name" value="CheA_P2-bd"/>
</dbReference>
<dbReference type="InterPro" id="IPR036061">
    <property type="entry name" value="CheW-like_dom_sf"/>
</dbReference>
<dbReference type="InterPro" id="IPR002545">
    <property type="entry name" value="CheW-lke_dom"/>
</dbReference>
<dbReference type="InterPro" id="IPR035891">
    <property type="entry name" value="CheY-binding_CheA"/>
</dbReference>
<dbReference type="InterPro" id="IPR036890">
    <property type="entry name" value="HATPase_C_sf"/>
</dbReference>
<dbReference type="InterPro" id="IPR005467">
    <property type="entry name" value="His_kinase_dom"/>
</dbReference>
<dbReference type="InterPro" id="IPR036641">
    <property type="entry name" value="HPT_dom_sf"/>
</dbReference>
<dbReference type="InterPro" id="IPR004358">
    <property type="entry name" value="Sig_transdc_His_kin-like_C"/>
</dbReference>
<dbReference type="InterPro" id="IPR008207">
    <property type="entry name" value="Sig_transdc_His_kin_Hpt_dom"/>
</dbReference>
<dbReference type="PANTHER" id="PTHR43395:SF10">
    <property type="entry name" value="CHEMOTAXIS PROTEIN CHEA"/>
    <property type="match status" value="1"/>
</dbReference>
<dbReference type="PANTHER" id="PTHR43395">
    <property type="entry name" value="SENSOR HISTIDINE KINASE CHEA"/>
    <property type="match status" value="1"/>
</dbReference>
<dbReference type="Pfam" id="PF01584">
    <property type="entry name" value="CheW"/>
    <property type="match status" value="1"/>
</dbReference>
<dbReference type="Pfam" id="PF02895">
    <property type="entry name" value="H-kinase_dim"/>
    <property type="match status" value="1"/>
</dbReference>
<dbReference type="Pfam" id="PF02518">
    <property type="entry name" value="HATPase_c"/>
    <property type="match status" value="1"/>
</dbReference>
<dbReference type="Pfam" id="PF01627">
    <property type="entry name" value="Hpt"/>
    <property type="match status" value="1"/>
</dbReference>
<dbReference type="Pfam" id="PF07194">
    <property type="entry name" value="P2"/>
    <property type="match status" value="1"/>
</dbReference>
<dbReference type="PRINTS" id="PR00344">
    <property type="entry name" value="BCTRLSENSOR"/>
</dbReference>
<dbReference type="SMART" id="SM00260">
    <property type="entry name" value="CheW"/>
    <property type="match status" value="1"/>
</dbReference>
<dbReference type="SMART" id="SM01231">
    <property type="entry name" value="H-kinase_dim"/>
    <property type="match status" value="1"/>
</dbReference>
<dbReference type="SMART" id="SM00387">
    <property type="entry name" value="HATPase_c"/>
    <property type="match status" value="1"/>
</dbReference>
<dbReference type="SMART" id="SM00073">
    <property type="entry name" value="HPT"/>
    <property type="match status" value="1"/>
</dbReference>
<dbReference type="SUPFAM" id="SSF55874">
    <property type="entry name" value="ATPase domain of HSP90 chaperone/DNA topoisomerase II/histidine kinase"/>
    <property type="match status" value="1"/>
</dbReference>
<dbReference type="SUPFAM" id="SSF50341">
    <property type="entry name" value="CheW-like"/>
    <property type="match status" value="1"/>
</dbReference>
<dbReference type="SUPFAM" id="SSF55052">
    <property type="entry name" value="CheY-binding domain of CheA"/>
    <property type="match status" value="1"/>
</dbReference>
<dbReference type="SUPFAM" id="SSF47226">
    <property type="entry name" value="Histidine-containing phosphotransfer domain, HPT domain"/>
    <property type="match status" value="1"/>
</dbReference>
<dbReference type="PROSITE" id="PS50851">
    <property type="entry name" value="CHEW"/>
    <property type="match status" value="1"/>
</dbReference>
<dbReference type="PROSITE" id="PS50109">
    <property type="entry name" value="HIS_KIN"/>
    <property type="match status" value="1"/>
</dbReference>
<dbReference type="PROSITE" id="PS50894">
    <property type="entry name" value="HPT"/>
    <property type="match status" value="1"/>
</dbReference>
<name>CHEA_TREPA</name>
<organism>
    <name type="scientific">Treponema pallidum (strain Nichols)</name>
    <dbReference type="NCBI Taxonomy" id="243276"/>
    <lineage>
        <taxon>Bacteria</taxon>
        <taxon>Pseudomonadati</taxon>
        <taxon>Spirochaetota</taxon>
        <taxon>Spirochaetia</taxon>
        <taxon>Spirochaetales</taxon>
        <taxon>Treponemataceae</taxon>
        <taxon>Treponema</taxon>
    </lineage>
</organism>
<gene>
    <name type="primary">cheA</name>
    <name type="ordered locus">TP_0363</name>
</gene>
<comment type="function">
    <text evidence="1">Involved in the transmission of sensory signals from the chemoreceptors to the flagellar motors. CheA is autophosphorylated; it can transfer its phosphate group to either CheB or CheY (By similarity).</text>
</comment>
<comment type="catalytic activity">
    <reaction>
        <text>ATP + protein L-histidine = ADP + protein N-phospho-L-histidine.</text>
        <dbReference type="EC" id="2.7.13.3"/>
    </reaction>
</comment>
<comment type="subcellular location">
    <subcellularLocation>
        <location evidence="5">Cytoplasm</location>
    </subcellularLocation>
</comment>
<accession>P96123</accession>
<accession>O83381</accession>
<reference key="1">
    <citation type="journal article" date="1997" name="DNA Seq.">
        <title>Identification, sequences, and expression of Treponema pallidum chemotaxis genes.</title>
        <authorList>
            <person name="Greene S.R."/>
            <person name="Stamm L.V."/>
            <person name="Hardham J.M."/>
            <person name="Young N.R."/>
            <person name="Frye J.G."/>
        </authorList>
    </citation>
    <scope>NUCLEOTIDE SEQUENCE [GENOMIC DNA]</scope>
    <source>
        <strain>Nichols</strain>
    </source>
</reference>
<reference key="2">
    <citation type="journal article" date="1998" name="Science">
        <title>Complete genome sequence of Treponema pallidum, the syphilis spirochete.</title>
        <authorList>
            <person name="Fraser C.M."/>
            <person name="Norris S.J."/>
            <person name="Weinstock G.M."/>
            <person name="White O."/>
            <person name="Sutton G.G."/>
            <person name="Dodson R.J."/>
            <person name="Gwinn M.L."/>
            <person name="Hickey E.K."/>
            <person name="Clayton R.A."/>
            <person name="Ketchum K.A."/>
            <person name="Sodergren E."/>
            <person name="Hardham J.M."/>
            <person name="McLeod M.P."/>
            <person name="Salzberg S.L."/>
            <person name="Peterson J.D."/>
            <person name="Khalak H.G."/>
            <person name="Richardson D.L."/>
            <person name="Howell J.K."/>
            <person name="Chidambaram M."/>
            <person name="Utterback T.R."/>
            <person name="McDonald L.A."/>
            <person name="Artiach P."/>
            <person name="Bowman C."/>
            <person name="Cotton M.D."/>
            <person name="Fujii C."/>
            <person name="Garland S.A."/>
            <person name="Hatch B."/>
            <person name="Horst K."/>
            <person name="Roberts K.M."/>
            <person name="Sandusky M."/>
            <person name="Weidman J.F."/>
            <person name="Smith H.O."/>
            <person name="Venter J.C."/>
        </authorList>
    </citation>
    <scope>NUCLEOTIDE SEQUENCE [LARGE SCALE GENOMIC DNA]</scope>
    <source>
        <strain>Nichols</strain>
    </source>
</reference>
<protein>
    <recommendedName>
        <fullName>Chemotaxis protein CheA</fullName>
        <ecNumber>2.7.13.3</ecNumber>
    </recommendedName>
</protein>
<feature type="chain" id="PRO_0000074719" description="Chemotaxis protein CheA">
    <location>
        <begin position="1"/>
        <end position="812"/>
    </location>
</feature>
<feature type="domain" description="HPt" evidence="4">
    <location>
        <begin position="1"/>
        <end position="111"/>
    </location>
</feature>
<feature type="domain" description="Histidine kinase" evidence="3">
    <location>
        <begin position="418"/>
        <end position="661"/>
    </location>
</feature>
<feature type="domain" description="CheW-like" evidence="2">
    <location>
        <begin position="663"/>
        <end position="798"/>
    </location>
</feature>
<feature type="modified residue" description="Phosphohistidine; by autocatalysis" evidence="3">
    <location>
        <position position="54"/>
    </location>
</feature>
<feature type="sequence conflict" description="In Ref. 1; AAC45555." evidence="5" ref="1">
    <original>G</original>
    <variation>E</variation>
    <location>
        <position position="428"/>
    </location>
</feature>